<keyword id="KW-0002">3D-structure</keyword>
<keyword id="KW-0903">Direct protein sequencing</keyword>
<keyword id="KW-0266">Ethylene biosynthesis</keyword>
<keyword id="KW-0292">Fruit ripening</keyword>
<keyword id="KW-0456">Lyase</keyword>
<keyword id="KW-0597">Phosphoprotein</keyword>
<keyword id="KW-0663">Pyridoxal phosphate</keyword>
<keyword id="KW-1185">Reference proteome</keyword>
<keyword id="KW-0949">S-adenosyl-L-methionine</keyword>
<gene>
    <name type="primary">ACS2</name>
    <name type="synonym">ACC2</name>
    <name type="synonym">PCVV4A</name>
</gene>
<feature type="chain" id="PRO_0000123912" description="1-aminocyclopropane-1-carboxylate synthase 2">
    <location>
        <begin position="1"/>
        <end position="485"/>
    </location>
</feature>
<feature type="binding site">
    <location>
        <position position="55"/>
    </location>
    <ligand>
        <name>substrate</name>
    </ligand>
</feature>
<feature type="binding site">
    <location>
        <position position="92"/>
    </location>
    <ligand>
        <name>substrate</name>
    </ligand>
</feature>
<feature type="modified residue" description="N6-(pyridoxal phosphate)lysine">
    <location>
        <position position="278"/>
    </location>
</feature>
<feature type="modified residue" description="Phosphoserine" evidence="2">
    <location>
        <position position="460"/>
    </location>
</feature>
<feature type="mutagenesis site" description="Loss of function; when expressed alone in E.coli. Partially complemented; when coexpressed with another ACS2 protein mutated on K-278." evidence="3">
    <original>Y</original>
    <variation>F</variation>
    <location>
        <position position="92"/>
    </location>
</feature>
<feature type="mutagenesis site" description="Loss of function; when expressed alone in E.coli. Partially complemented; when coexpressed with another ACS2 protein mutated on Y-72." evidence="3">
    <original>K</original>
    <variation>A</variation>
    <location>
        <position position="278"/>
    </location>
</feature>
<feature type="mutagenesis site" description="Loss of function; due to a strong reduction in both substrate and pyridoxal phosphate binding." evidence="1">
    <original>R</original>
    <variation>L</variation>
    <location>
        <position position="286"/>
    </location>
</feature>
<feature type="mutagenesis site" description="Abolishes phosphorylation.">
    <original>S</original>
    <variation>G</variation>
    <location>
        <position position="460"/>
    </location>
</feature>
<feature type="mutagenesis site" description="No effect.">
    <original>S</original>
    <variation>G</variation>
    <location>
        <position position="462"/>
    </location>
</feature>
<feature type="sequence conflict" description="In Ref. 1; CAA41856." evidence="4" ref="1">
    <original>A</original>
    <variation>V</variation>
    <location>
        <position position="124"/>
    </location>
</feature>
<feature type="sequence conflict" description="In Ref. 2; AAA81580." evidence="4" ref="2">
    <original>L</original>
    <variation>P</variation>
    <location>
        <position position="322"/>
    </location>
</feature>
<feature type="sequence conflict" description="In Ref. 2; AAA81580." evidence="4" ref="2">
    <original>P</original>
    <variation>L</variation>
    <location>
        <position position="399"/>
    </location>
</feature>
<feature type="helix" evidence="6">
    <location>
        <begin position="16"/>
        <end position="18"/>
    </location>
</feature>
<feature type="helix" evidence="6">
    <location>
        <begin position="29"/>
        <end position="36"/>
    </location>
</feature>
<feature type="strand" evidence="6">
    <location>
        <begin position="41"/>
        <end position="44"/>
    </location>
</feature>
<feature type="strand" evidence="6">
    <location>
        <begin position="47"/>
        <end position="50"/>
    </location>
</feature>
<feature type="helix" evidence="6">
    <location>
        <begin position="60"/>
        <end position="69"/>
    </location>
</feature>
<feature type="helix" evidence="6">
    <location>
        <begin position="83"/>
        <end position="88"/>
    </location>
</feature>
<feature type="helix" evidence="6">
    <location>
        <begin position="96"/>
        <end position="109"/>
    </location>
</feature>
<feature type="turn" evidence="6">
    <location>
        <begin position="110"/>
        <end position="112"/>
    </location>
</feature>
<feature type="helix" evidence="5">
    <location>
        <begin position="118"/>
        <end position="120"/>
    </location>
</feature>
<feature type="strand" evidence="6">
    <location>
        <begin position="122"/>
        <end position="125"/>
    </location>
</feature>
<feature type="helix" evidence="6">
    <location>
        <begin position="126"/>
        <end position="138"/>
    </location>
</feature>
<feature type="strand" evidence="6">
    <location>
        <begin position="144"/>
        <end position="150"/>
    </location>
</feature>
<feature type="helix" evidence="6">
    <location>
        <begin position="155"/>
        <end position="158"/>
    </location>
</feature>
<feature type="turn" evidence="6">
    <location>
        <begin position="159"/>
        <end position="163"/>
    </location>
</feature>
<feature type="strand" evidence="6">
    <location>
        <begin position="166"/>
        <end position="170"/>
    </location>
</feature>
<feature type="turn" evidence="6">
    <location>
        <begin position="174"/>
        <end position="178"/>
    </location>
</feature>
<feature type="helix" evidence="6">
    <location>
        <begin position="182"/>
        <end position="194"/>
    </location>
</feature>
<feature type="strand" evidence="6">
    <location>
        <begin position="199"/>
        <end position="207"/>
    </location>
</feature>
<feature type="turn" evidence="6">
    <location>
        <begin position="209"/>
        <end position="211"/>
    </location>
</feature>
<feature type="helix" evidence="6">
    <location>
        <begin position="217"/>
        <end position="228"/>
    </location>
</feature>
<feature type="turn" evidence="6">
    <location>
        <begin position="229"/>
        <end position="231"/>
    </location>
</feature>
<feature type="strand" evidence="6">
    <location>
        <begin position="233"/>
        <end position="237"/>
    </location>
</feature>
<feature type="helix" evidence="6">
    <location>
        <begin position="241"/>
        <end position="243"/>
    </location>
</feature>
<feature type="strand" evidence="6">
    <location>
        <begin position="246"/>
        <end position="248"/>
    </location>
</feature>
<feature type="helix" evidence="6">
    <location>
        <begin position="253"/>
        <end position="257"/>
    </location>
</feature>
<feature type="helix" evidence="6">
    <location>
        <begin position="260"/>
        <end position="262"/>
    </location>
</feature>
<feature type="strand" evidence="6">
    <location>
        <begin position="269"/>
        <end position="276"/>
    </location>
</feature>
<feature type="turn" evidence="6">
    <location>
        <begin position="277"/>
        <end position="279"/>
    </location>
</feature>
<feature type="helix" evidence="6">
    <location>
        <begin position="283"/>
        <end position="285"/>
    </location>
</feature>
<feature type="strand" evidence="6">
    <location>
        <begin position="287"/>
        <end position="293"/>
    </location>
</feature>
<feature type="helix" evidence="6">
    <location>
        <begin position="295"/>
        <end position="305"/>
    </location>
</feature>
<feature type="helix" evidence="6">
    <location>
        <begin position="312"/>
        <end position="321"/>
    </location>
</feature>
<feature type="helix" evidence="6">
    <location>
        <begin position="325"/>
        <end position="352"/>
    </location>
</feature>
<feature type="strand" evidence="6">
    <location>
        <begin position="361"/>
        <end position="369"/>
    </location>
</feature>
<feature type="helix" evidence="6">
    <location>
        <begin position="371"/>
        <end position="373"/>
    </location>
</feature>
<feature type="strand" evidence="6">
    <location>
        <begin position="375"/>
        <end position="378"/>
    </location>
</feature>
<feature type="helix" evidence="6">
    <location>
        <begin position="379"/>
        <end position="391"/>
    </location>
</feature>
<feature type="helix" evidence="6">
    <location>
        <begin position="400"/>
        <end position="403"/>
    </location>
</feature>
<feature type="strand" evidence="6">
    <location>
        <begin position="406"/>
        <end position="414"/>
    </location>
</feature>
<feature type="strand" evidence="6">
    <location>
        <begin position="416"/>
        <end position="418"/>
    </location>
</feature>
<feature type="helix" evidence="6">
    <location>
        <begin position="420"/>
        <end position="435"/>
    </location>
</feature>
<name>1A12_SOLLC</name>
<comment type="function">
    <text>1-aminocyclopropane-1-carboxylate synthase (ACS) enzymes catalyze the conversion of S-adenosyl-L-methionine (SAM) into 1-aminocyclopropane-1-carboxylate (ACC), a direct precursor of ethylene.</text>
</comment>
<comment type="catalytic activity">
    <reaction>
        <text>S-adenosyl-L-methionine = 1-aminocyclopropane-1-carboxylate + S-methyl-5'-thioadenosine + H(+)</text>
        <dbReference type="Rhea" id="RHEA:21744"/>
        <dbReference type="ChEBI" id="CHEBI:15378"/>
        <dbReference type="ChEBI" id="CHEBI:17509"/>
        <dbReference type="ChEBI" id="CHEBI:58360"/>
        <dbReference type="ChEBI" id="CHEBI:59789"/>
        <dbReference type="EC" id="4.4.1.14"/>
    </reaction>
</comment>
<comment type="cofactor">
    <cofactor>
        <name>pyridoxal 5'-phosphate</name>
        <dbReference type="ChEBI" id="CHEBI:597326"/>
    </cofactor>
</comment>
<comment type="pathway">
    <text>Alkene biosynthesis; ethylene biosynthesis via S-adenosyl-L-methionine; ethylene from S-adenosyl-L-methionine: step 1/2.</text>
</comment>
<comment type="subunit">
    <text>Homodimer and heterodimer. In vivo, the relevance of heterodimerization with other ACS enzymes is however unsure.</text>
</comment>
<comment type="induction">
    <text>Hormones, such as auxin, environmental factors, such as mechanical wounding and a number of chemicals.</text>
</comment>
<comment type="PTM">
    <text evidence="2">Phosphorylated on Ser 460; phosphorylation may regulate its turnover.</text>
</comment>
<comment type="PTM">
    <text>May be processed at its C-terminus.</text>
</comment>
<comment type="miscellaneous">
    <text>The stability of ACS proteins, and the regulation of such stability, play a central role in ethylene biosynthesis.</text>
</comment>
<comment type="similarity">
    <text evidence="4">Belongs to the class-I pyridoxal-phosphate-dependent aminotransferase family.</text>
</comment>
<dbReference type="EC" id="4.4.1.14"/>
<dbReference type="EMBL" id="X59139">
    <property type="protein sequence ID" value="CAA41855.1"/>
    <property type="molecule type" value="Genomic_DNA"/>
</dbReference>
<dbReference type="EMBL" id="X59145">
    <property type="protein sequence ID" value="CAA41856.1"/>
    <property type="molecule type" value="mRNA"/>
</dbReference>
<dbReference type="EMBL" id="M34289">
    <property type="protein sequence ID" value="AAA81580.1"/>
    <property type="molecule type" value="mRNA"/>
</dbReference>
<dbReference type="PIR" id="S19677">
    <property type="entry name" value="S19677"/>
</dbReference>
<dbReference type="RefSeq" id="NP_001234178.2">
    <property type="nucleotide sequence ID" value="NM_001247249.2"/>
</dbReference>
<dbReference type="PDB" id="1IAX">
    <property type="method" value="X-ray"/>
    <property type="resolution" value="2.80 A"/>
    <property type="chains" value="A/B=11-438"/>
</dbReference>
<dbReference type="PDB" id="1IAY">
    <property type="method" value="X-ray"/>
    <property type="resolution" value="2.70 A"/>
    <property type="chains" value="A=11-438"/>
</dbReference>
<dbReference type="PDBsum" id="1IAX"/>
<dbReference type="PDBsum" id="1IAY"/>
<dbReference type="SMR" id="P18485"/>
<dbReference type="FunCoup" id="P18485">
    <property type="interactions" value="314"/>
</dbReference>
<dbReference type="STRING" id="4081.P18485"/>
<dbReference type="iPTMnet" id="P18485"/>
<dbReference type="PaxDb" id="4081-Solyc01g095080.2.1"/>
<dbReference type="EnsemblPlants" id="Solyc01g095080.3.1">
    <property type="protein sequence ID" value="Solyc01g095080.3.1"/>
    <property type="gene ID" value="Solyc01g095080.3"/>
</dbReference>
<dbReference type="GeneID" id="606304"/>
<dbReference type="Gramene" id="Solyc01g095080.3.1">
    <property type="protein sequence ID" value="Solyc01g095080.3.1"/>
    <property type="gene ID" value="Solyc01g095080.3"/>
</dbReference>
<dbReference type="KEGG" id="sly:606304"/>
<dbReference type="eggNOG" id="KOG0256">
    <property type="taxonomic scope" value="Eukaryota"/>
</dbReference>
<dbReference type="HOGENOM" id="CLU_017584_1_0_1"/>
<dbReference type="InParanoid" id="P18485"/>
<dbReference type="OMA" id="PYFAEYK"/>
<dbReference type="OrthoDB" id="691673at2759"/>
<dbReference type="PhylomeDB" id="P18485"/>
<dbReference type="BRENDA" id="4.4.1.14">
    <property type="organism ID" value="3101"/>
</dbReference>
<dbReference type="UniPathway" id="UPA00384">
    <property type="reaction ID" value="UER00562"/>
</dbReference>
<dbReference type="EvolutionaryTrace" id="P18485"/>
<dbReference type="Proteomes" id="UP000004994">
    <property type="component" value="Chromosome 1"/>
</dbReference>
<dbReference type="ExpressionAtlas" id="P18485">
    <property type="expression patterns" value="baseline and differential"/>
</dbReference>
<dbReference type="GO" id="GO:0016847">
    <property type="term" value="F:1-aminocyclopropane-1-carboxylate synthase activity"/>
    <property type="evidence" value="ECO:0007669"/>
    <property type="project" value="UniProtKB-EC"/>
</dbReference>
<dbReference type="GO" id="GO:0030170">
    <property type="term" value="F:pyridoxal phosphate binding"/>
    <property type="evidence" value="ECO:0007669"/>
    <property type="project" value="InterPro"/>
</dbReference>
<dbReference type="GO" id="GO:0008483">
    <property type="term" value="F:transaminase activity"/>
    <property type="evidence" value="ECO:0000318"/>
    <property type="project" value="GO_Central"/>
</dbReference>
<dbReference type="GO" id="GO:0006520">
    <property type="term" value="P:amino acid metabolic process"/>
    <property type="evidence" value="ECO:0000318"/>
    <property type="project" value="GO_Central"/>
</dbReference>
<dbReference type="GO" id="GO:0009693">
    <property type="term" value="P:ethylene biosynthetic process"/>
    <property type="evidence" value="ECO:0007669"/>
    <property type="project" value="UniProtKB-UniPathway"/>
</dbReference>
<dbReference type="GO" id="GO:0009835">
    <property type="term" value="P:fruit ripening"/>
    <property type="evidence" value="ECO:0007669"/>
    <property type="project" value="UniProtKB-KW"/>
</dbReference>
<dbReference type="CDD" id="cd00609">
    <property type="entry name" value="AAT_like"/>
    <property type="match status" value="1"/>
</dbReference>
<dbReference type="FunFam" id="3.90.1150.10:FF:000038">
    <property type="entry name" value="1-aminocyclopropane-1-carboxylate synthase 2"/>
    <property type="match status" value="1"/>
</dbReference>
<dbReference type="FunFam" id="3.40.640.10:FF:000051">
    <property type="entry name" value="1-aminocyclopropane-1-carboxylate synthase 3"/>
    <property type="match status" value="1"/>
</dbReference>
<dbReference type="Gene3D" id="3.90.1150.10">
    <property type="entry name" value="Aspartate Aminotransferase, domain 1"/>
    <property type="match status" value="1"/>
</dbReference>
<dbReference type="Gene3D" id="3.40.640.10">
    <property type="entry name" value="Type I PLP-dependent aspartate aminotransferase-like (Major domain)"/>
    <property type="match status" value="1"/>
</dbReference>
<dbReference type="InterPro" id="IPR004839">
    <property type="entry name" value="Aminotransferase_I/II_large"/>
</dbReference>
<dbReference type="InterPro" id="IPR050478">
    <property type="entry name" value="Ethylene_sulfur-biosynth"/>
</dbReference>
<dbReference type="InterPro" id="IPR004838">
    <property type="entry name" value="NHTrfase_class1_PyrdxlP-BS"/>
</dbReference>
<dbReference type="InterPro" id="IPR015424">
    <property type="entry name" value="PyrdxlP-dep_Trfase"/>
</dbReference>
<dbReference type="InterPro" id="IPR015421">
    <property type="entry name" value="PyrdxlP-dep_Trfase_major"/>
</dbReference>
<dbReference type="InterPro" id="IPR015422">
    <property type="entry name" value="PyrdxlP-dep_Trfase_small"/>
</dbReference>
<dbReference type="PANTHER" id="PTHR43795:SF74">
    <property type="entry name" value="1-AMINOCYCLOPROPANE-1-CARBOXYLATE SYNTHASE-LIKE PROTEIN 1"/>
    <property type="match status" value="1"/>
</dbReference>
<dbReference type="PANTHER" id="PTHR43795">
    <property type="entry name" value="BIFUNCTIONAL ASPARTATE AMINOTRANSFERASE AND GLUTAMATE/ASPARTATE-PREPHENATE AMINOTRANSFERASE-RELATED"/>
    <property type="match status" value="1"/>
</dbReference>
<dbReference type="Pfam" id="PF00155">
    <property type="entry name" value="Aminotran_1_2"/>
    <property type="match status" value="1"/>
</dbReference>
<dbReference type="PRINTS" id="PR00753">
    <property type="entry name" value="ACCSYNTHASE"/>
</dbReference>
<dbReference type="SUPFAM" id="SSF53383">
    <property type="entry name" value="PLP-dependent transferases"/>
    <property type="match status" value="1"/>
</dbReference>
<dbReference type="PROSITE" id="PS00105">
    <property type="entry name" value="AA_TRANSFER_CLASS_1"/>
    <property type="match status" value="1"/>
</dbReference>
<reference key="1">
    <citation type="journal article" date="1991" name="J. Mol. Biol.">
        <title>1-aminocyclopropane-1-carboxylate synthase in tomato is encoded by a multigene family whose transcription is induced during fruit and floral senescence.</title>
        <authorList>
            <person name="Rottmann W.H."/>
            <person name="Peter G.F."/>
            <person name="Oeller P.W."/>
            <person name="Keller J.A."/>
            <person name="Shen N.F."/>
            <person name="Nagy B.P."/>
            <person name="Taylor L.P."/>
            <person name="Campbell A.D."/>
            <person name="Theologis A."/>
        </authorList>
    </citation>
    <scope>NUCLEOTIDE SEQUENCE [GENOMIC DNA / MRNA]</scope>
    <source>
        <tissue>Etiolated hypocotyl</tissue>
    </source>
</reference>
<reference key="2">
    <citation type="journal article" date="1990" name="Proc. Natl. Acad. Sci. U.S.A.">
        <title>Cloning and sequence of two different cDNAs encoding 1-aminocyclopropane-1-carboxylate synthase in tomato.</title>
        <authorList>
            <person name="van der Straeten D."/>
            <person name="van Wiemeersch L."/>
            <person name="Goodman H.M."/>
            <person name="van Montagu M."/>
        </authorList>
    </citation>
    <scope>NUCLEOTIDE SEQUENCE [MRNA]</scope>
    <scope>PARTIAL PROTEIN SEQUENCE</scope>
    <source>
        <strain>cv. Orlando</strain>
        <tissue>Fruit</tissue>
    </source>
</reference>
<reference key="3">
    <citation type="journal article" date="1998" name="J. Biol. Chem.">
        <title>Complementation analysis of mutants of 1-aminocyclopropane-1-carboxylate synthase reveals the enzyme is a dimer with shared active sites.</title>
        <authorList>
            <person name="Tarun A.S."/>
            <person name="Theologis A."/>
        </authorList>
    </citation>
    <scope>HOMODIMERIZATION</scope>
    <scope>MUTAGENESIS OF TYR-92 AND LYS-278</scope>
</reference>
<reference key="4">
    <citation type="journal article" date="1999" name="Plant Physiol.">
        <title>The multiple roles of conserved arginine 286 of 1-aminocyclopropane-1-carboxylate synthase. Coenzyme binding, substrate binding, and beyond.</title>
        <authorList>
            <person name="Zhou H."/>
            <person name="Wang H.W."/>
            <person name="Zhu K."/>
            <person name="Sui S.F."/>
            <person name="Xu P."/>
            <person name="Yang S.F."/>
            <person name="Li N."/>
        </authorList>
    </citation>
    <scope>MUTAGENESIS OF ARG-286</scope>
</reference>
<reference key="5">
    <citation type="journal article" date="2001" name="J. Biol. Chem.">
        <title>Phosphorylation of tomato 1-aminocyclopropane-1-carboxylic acid synthase, LE-ACS2, at the C-terminal region.</title>
        <authorList>
            <person name="Tatsuki M."/>
            <person name="Mori H."/>
        </authorList>
    </citation>
    <scope>PHOSPHORYLATION AT SER-460</scope>
</reference>
<reference key="6">
    <citation type="journal article" date="2001" name="J. Biol. Chem.">
        <title>Crystal structures of 1-aminocyclopropane-1-carboxylate (ACC) synthase in complex with aminoethoxyvinylglycine and pyridoxal-5'-phosphate provide new insight into catalytic mechanisms.</title>
        <authorList>
            <person name="Huai Q."/>
            <person name="Xia Y."/>
            <person name="Chen Y."/>
            <person name="Callahan B."/>
            <person name="Li N."/>
            <person name="Ke H."/>
        </authorList>
    </citation>
    <scope>X-RAY CRYSTALLOGRAPHY (2.8 ANGSTROMS) OF 11-438</scope>
</reference>
<protein>
    <recommendedName>
        <fullName>1-aminocyclopropane-1-carboxylate synthase 2</fullName>
        <shortName>ACC synthase 2</shortName>
        <ecNumber>4.4.1.14</ecNumber>
    </recommendedName>
    <alternativeName>
        <fullName>Le-ACS2</fullName>
        <shortName>ACS-2</shortName>
    </alternativeName>
    <alternativeName>
        <fullName>S-adenosyl-L-methionine methylthioadenosine-lyase 2</fullName>
    </alternativeName>
</protein>
<evidence type="ECO:0000269" key="1">
    <source>
    </source>
</evidence>
<evidence type="ECO:0000269" key="2">
    <source>
    </source>
</evidence>
<evidence type="ECO:0000269" key="3">
    <source>
    </source>
</evidence>
<evidence type="ECO:0000305" key="4"/>
<evidence type="ECO:0007829" key="5">
    <source>
        <dbReference type="PDB" id="1IAX"/>
    </source>
</evidence>
<evidence type="ECO:0007829" key="6">
    <source>
        <dbReference type="PDB" id="1IAY"/>
    </source>
</evidence>
<accession>P18485</accession>
<organism>
    <name type="scientific">Solanum lycopersicum</name>
    <name type="common">Tomato</name>
    <name type="synonym">Lycopersicon esculentum</name>
    <dbReference type="NCBI Taxonomy" id="4081"/>
    <lineage>
        <taxon>Eukaryota</taxon>
        <taxon>Viridiplantae</taxon>
        <taxon>Streptophyta</taxon>
        <taxon>Embryophyta</taxon>
        <taxon>Tracheophyta</taxon>
        <taxon>Spermatophyta</taxon>
        <taxon>Magnoliopsida</taxon>
        <taxon>eudicotyledons</taxon>
        <taxon>Gunneridae</taxon>
        <taxon>Pentapetalae</taxon>
        <taxon>asterids</taxon>
        <taxon>lamiids</taxon>
        <taxon>Solanales</taxon>
        <taxon>Solanaceae</taxon>
        <taxon>Solanoideae</taxon>
        <taxon>Solaneae</taxon>
        <taxon>Solanum</taxon>
        <taxon>Solanum subgen. Lycopersicon</taxon>
    </lineage>
</organism>
<sequence length="485" mass="54663">MGFEIAKTNSILSKLATNEEHGENSPYFDGWKAYDSDPFHPLKNPNGVIQMGLAENQLCLDLIEDWIKRNPKGSICSEGIKSFKAIANFQDYHGLPEFRKAIAKFMEKTRGGRVRFDPERVVMAGGATGANETIIFCLADPGDAFLVPSPYYPAFNRDLRWRTGVQLIPIHCESSNNFKITSKAVKEAYENAQKSNIKVKGLILTNPSNPLGTTLDKDTLKSVLSFTNQHNIHLVCDEIYAATVFDTPQFVSIAEILDEQEMTYCNKDLVHIVYSLSKDMGLPGFRVGIIYSFNDDVVNCARKMSSFGLVSTQTQYFLAAMLSDEKFVDNFLRESAMRLGKRHKHFTNGLEVVGIKCLKNNAGLFCWMDLRPLLRESTFDSEMSLWRVIINDVKLNVSPGSSFECQEPGWFRVCFANMDDGTVDIALARIRRFVGVEKSGDKSSSMEKKQQWKKNNLRLSFSKRMYDESVLSPLSSPIPPSPLVR</sequence>
<proteinExistence type="evidence at protein level"/>